<sequence length="302" mass="33436">MASSWFFIVFLVLTVASVRCTTVDHMPSTDEDARDYSKLKTKTEEATDEHHSRTQQAKDELKSKADHAANEVKSNTQQAKDRASEVGKEAKEYTESWTEWAKEKISEGLGFKQDDDPKGSVEKAFDSVADTATKTKDKLQDMASGAGEYSAGKAKDMKDTAYKKTDDVKNAAKGKSSEMRQATTEKARELADSAKENANTAYIAAKEKVRDMADRTSEMTNEAQERGARKAEEAKEVVAEKAEGAAEETKKKNEERGESLKWAKEKAKQGYDAAKSKAEETIESAKDTIASGYESRSRNHKN</sequence>
<feature type="chain" id="PRO_0000221228" description="Late embryogenesis abundant protein D-29">
    <location>
        <begin position="1"/>
        <end position="302"/>
    </location>
</feature>
<feature type="region of interest" description="Disordered" evidence="1">
    <location>
        <begin position="25"/>
        <end position="93"/>
    </location>
</feature>
<feature type="region of interest" description="Disordered" evidence="1">
    <location>
        <begin position="168"/>
        <end position="193"/>
    </location>
</feature>
<feature type="region of interest" description="Disordered" evidence="1">
    <location>
        <begin position="205"/>
        <end position="302"/>
    </location>
</feature>
<feature type="compositionally biased region" description="Basic and acidic residues" evidence="1">
    <location>
        <begin position="34"/>
        <end position="70"/>
    </location>
</feature>
<feature type="compositionally biased region" description="Basic and acidic residues" evidence="1">
    <location>
        <begin position="79"/>
        <end position="93"/>
    </location>
</feature>
<feature type="compositionally biased region" description="Basic and acidic residues" evidence="1">
    <location>
        <begin position="205"/>
        <end position="286"/>
    </location>
</feature>
<reference key="1">
    <citation type="journal article" date="1988" name="Plant Mol. Biol.">
        <title>Sequence and characterization of 6 Lea proteins and their genes from cotton.</title>
        <authorList>
            <person name="Baker J."/>
            <person name="Steele C."/>
            <person name="Dure L. III"/>
        </authorList>
        <dbReference type="AGRICOLA" id="IND92000052"/>
    </citation>
    <scope>NUCLEOTIDE SEQUENCE [GENOMIC DNA]</scope>
    <source>
        <strain>cv. Coker 201</strain>
        <tissue>Seed</tissue>
    </source>
</reference>
<name>LEA29_GOSHI</name>
<keyword id="KW-1185">Reference proteome</keyword>
<organism>
    <name type="scientific">Gossypium hirsutum</name>
    <name type="common">Upland cotton</name>
    <name type="synonym">Gossypium mexicanum</name>
    <dbReference type="NCBI Taxonomy" id="3635"/>
    <lineage>
        <taxon>Eukaryota</taxon>
        <taxon>Viridiplantae</taxon>
        <taxon>Streptophyta</taxon>
        <taxon>Embryophyta</taxon>
        <taxon>Tracheophyta</taxon>
        <taxon>Spermatophyta</taxon>
        <taxon>Magnoliopsida</taxon>
        <taxon>eudicotyledons</taxon>
        <taxon>Gunneridae</taxon>
        <taxon>Pentapetalae</taxon>
        <taxon>rosids</taxon>
        <taxon>malvids</taxon>
        <taxon>Malvales</taxon>
        <taxon>Malvaceae</taxon>
        <taxon>Malvoideae</taxon>
        <taxon>Gossypium</taxon>
    </lineage>
</organism>
<protein>
    <recommendedName>
        <fullName>Late embryogenesis abundant protein D-29</fullName>
        <shortName>LEA D-29</shortName>
    </recommendedName>
</protein>
<comment type="function">
    <text>LEA protein are late embryonic proteins abundant in higher plant seed embryos. There are two subsets of LEA proteins (5a and 5b), the first ones are expressed when the cotyledon weight reach 80 mg and the second set are expressed above 100 mg. The function of those proteins is not known.</text>
</comment>
<comment type="miscellaneous">
    <text>This is a SET 5a protein.</text>
</comment>
<comment type="similarity">
    <text evidence="2">Belongs to the LEA type 1 family.</text>
</comment>
<comment type="sequence caution" evidence="2">
    <conflict type="erroneous gene model prediction">
        <sequence resource="EMBL-CDS" id="CAA31591"/>
    </conflict>
</comment>
<proteinExistence type="inferred from homology"/>
<accession>P13940</accession>
<evidence type="ECO:0000256" key="1">
    <source>
        <dbReference type="SAM" id="MobiDB-lite"/>
    </source>
</evidence>
<evidence type="ECO:0000305" key="2"/>
<dbReference type="EMBL" id="X13203">
    <property type="protein sequence ID" value="CAA31591.1"/>
    <property type="status" value="ALT_SEQ"/>
    <property type="molecule type" value="Genomic_DNA"/>
</dbReference>
<dbReference type="PIR" id="S04045">
    <property type="entry name" value="S04045"/>
</dbReference>
<dbReference type="SMR" id="P13940"/>
<dbReference type="STRING" id="3635.P13940"/>
<dbReference type="PaxDb" id="3635-P13940"/>
<dbReference type="Proteomes" id="UP000189702">
    <property type="component" value="Unplaced"/>
</dbReference>
<dbReference type="GO" id="GO:0009414">
    <property type="term" value="P:response to water deprivation"/>
    <property type="evidence" value="ECO:0000318"/>
    <property type="project" value="GO_Central"/>
</dbReference>
<dbReference type="Gene3D" id="6.10.140.1430">
    <property type="match status" value="1"/>
</dbReference>
<dbReference type="Gene3D" id="1.20.5.1230">
    <property type="entry name" value="Apolipoprotein A-I"/>
    <property type="match status" value="1"/>
</dbReference>
<dbReference type="PANTHER" id="PTHR47372">
    <property type="entry name" value="DAUER UP-REGULATED-RELATED"/>
    <property type="match status" value="1"/>
</dbReference>
<dbReference type="PANTHER" id="PTHR47372:SF5">
    <property type="entry name" value="LATE EMBRYOGENESIS ABUNDANT PROTEIN (LEA) FAMILY PROTEIN"/>
    <property type="match status" value="1"/>
</dbReference>